<proteinExistence type="evidence at protein level"/>
<comment type="function">
    <text evidence="3">Nucleotide-sugar transporter that transports UDP-xylose and UMP in a strict counter-exchange mode.</text>
</comment>
<comment type="biophysicochemical properties">
    <kinetics>
        <KM evidence="3">58 uM for UDP-Xylose</KM>
        <Vmax evidence="3">4.0 nmol/sec/mg enzyme toward UDP-Xylose</Vmax>
    </kinetics>
</comment>
<comment type="subcellular location">
    <subcellularLocation>
        <location evidence="3">Golgi apparatus membrane</location>
        <topology evidence="2">Multi-pass membrane protein</topology>
    </subcellularLocation>
</comment>
<comment type="alternative products">
    <event type="alternative splicing"/>
    <isoform>
        <id>Q8RXL8-1</id>
        <name>1</name>
        <sequence type="displayed"/>
    </isoform>
    <text>A number of isoforms are produced. According to EST sequences.</text>
</comment>
<comment type="tissue specificity">
    <text evidence="3">Ubiquitous.</text>
</comment>
<comment type="similarity">
    <text evidence="4">Belongs to the TPT transporter family. TPT (TC 2.A.7.9) subfamily.</text>
</comment>
<comment type="sequence caution" evidence="4">
    <conflict type="erroneous gene model prediction">
        <sequence resource="EMBL-CDS" id="AAF63135"/>
    </conflict>
</comment>
<sequence>MSEGQKFQLGTIGALSLSVVSSVSIVICNKALISTLGFTFATTLTSWHLLVTFCSLHVALWMKMFEHKPFDPRAVMGFGILNGISIGLLNLSLGFNSVGFYQMTKLAIIPCTVLLETLFFRKKFSRKIQFSLTILLLGVGIATVTDLQLNMLGSVLSLLAVVTTCVAQIMTNTIQKKFKVSSTQLLYQSCPYQAITLFVTGPFLDGLLTNQNVFAFKYTSQVVFFIVLSCLISVSVNFSTFLVIGKTSPVTYQVLGHLKTCLVLAFGYVLLRDPFDWRNILGILVAVIGMVVYSYYCSIETQQKASETSTQLPQMKESEKDPLIAAENGSGVLSDGGGGVQQKTVAPVWNSNKDFQA</sequence>
<evidence type="ECO:0000250" key="1">
    <source>
        <dbReference type="UniProtKB" id="Q9FDZ5"/>
    </source>
</evidence>
<evidence type="ECO:0000255" key="2"/>
<evidence type="ECO:0000269" key="3">
    <source>
    </source>
</evidence>
<evidence type="ECO:0000305" key="4"/>
<evidence type="ECO:0000312" key="5">
    <source>
        <dbReference type="Araport" id="AT1G06890"/>
    </source>
</evidence>
<evidence type="ECO:0000312" key="6">
    <source>
        <dbReference type="EMBL" id="AAF63135.1"/>
    </source>
</evidence>
<evidence type="ECO:0000312" key="7">
    <source>
        <dbReference type="EMBL" id="AKA88214.1"/>
    </source>
</evidence>
<accession>Q8RXL8</accession>
<accession>A0A0E3MVM2</accession>
<accession>Q9M9Z3</accession>
<organism>
    <name type="scientific">Arabidopsis thaliana</name>
    <name type="common">Mouse-ear cress</name>
    <dbReference type="NCBI Taxonomy" id="3702"/>
    <lineage>
        <taxon>Eukaryota</taxon>
        <taxon>Viridiplantae</taxon>
        <taxon>Streptophyta</taxon>
        <taxon>Embryophyta</taxon>
        <taxon>Tracheophyta</taxon>
        <taxon>Spermatophyta</taxon>
        <taxon>Magnoliopsida</taxon>
        <taxon>eudicotyledons</taxon>
        <taxon>Gunneridae</taxon>
        <taxon>Pentapetalae</taxon>
        <taxon>rosids</taxon>
        <taxon>malvids</taxon>
        <taxon>Brassicales</taxon>
        <taxon>Brassicaceae</taxon>
        <taxon>Camelineae</taxon>
        <taxon>Arabidopsis</taxon>
    </lineage>
</organism>
<name>UXT3_ARATH</name>
<dbReference type="EMBL" id="KP872768">
    <property type="protein sequence ID" value="AKA88214.1"/>
    <property type="molecule type" value="mRNA"/>
</dbReference>
<dbReference type="EMBL" id="AC011001">
    <property type="protein sequence ID" value="AAF63135.1"/>
    <property type="status" value="ALT_SEQ"/>
    <property type="molecule type" value="Genomic_DNA"/>
</dbReference>
<dbReference type="EMBL" id="CP002684">
    <property type="protein sequence ID" value="AEE28048.1"/>
    <property type="molecule type" value="Genomic_DNA"/>
</dbReference>
<dbReference type="EMBL" id="CP002684">
    <property type="protein sequence ID" value="AEE28049.1"/>
    <property type="molecule type" value="Genomic_DNA"/>
</dbReference>
<dbReference type="EMBL" id="AY080815">
    <property type="protein sequence ID" value="AAL87295.1"/>
    <property type="molecule type" value="mRNA"/>
</dbReference>
<dbReference type="EMBL" id="AY117281">
    <property type="protein sequence ID" value="AAM51356.1"/>
    <property type="molecule type" value="mRNA"/>
</dbReference>
<dbReference type="PIR" id="F86203">
    <property type="entry name" value="F86203"/>
</dbReference>
<dbReference type="RefSeq" id="NP_001077471.1">
    <molecule id="Q8RXL8-1"/>
    <property type="nucleotide sequence ID" value="NM_001084002.2"/>
</dbReference>
<dbReference type="RefSeq" id="NP_172172.2">
    <molecule id="Q8RXL8-1"/>
    <property type="nucleotide sequence ID" value="NM_100564.5"/>
</dbReference>
<dbReference type="SMR" id="Q8RXL8"/>
<dbReference type="BioGRID" id="22440">
    <property type="interactions" value="15"/>
</dbReference>
<dbReference type="FunCoup" id="Q8RXL8">
    <property type="interactions" value="2235"/>
</dbReference>
<dbReference type="IntAct" id="Q8RXL8">
    <property type="interactions" value="15"/>
</dbReference>
<dbReference type="STRING" id="3702.Q8RXL8"/>
<dbReference type="iPTMnet" id="Q8RXL8"/>
<dbReference type="PaxDb" id="3702-AT1G06890.1"/>
<dbReference type="ProteomicsDB" id="243246">
    <molecule id="Q8RXL8-1"/>
</dbReference>
<dbReference type="EnsemblPlants" id="AT1G06890.1">
    <molecule id="Q8RXL8-1"/>
    <property type="protein sequence ID" value="AT1G06890.1"/>
    <property type="gene ID" value="AT1G06890"/>
</dbReference>
<dbReference type="EnsemblPlants" id="AT1G06890.2">
    <molecule id="Q8RXL8-1"/>
    <property type="protein sequence ID" value="AT1G06890.2"/>
    <property type="gene ID" value="AT1G06890"/>
</dbReference>
<dbReference type="GeneID" id="837199"/>
<dbReference type="Gramene" id="AT1G06890.1">
    <molecule id="Q8RXL8-1"/>
    <property type="protein sequence ID" value="AT1G06890.1"/>
    <property type="gene ID" value="AT1G06890"/>
</dbReference>
<dbReference type="Gramene" id="AT1G06890.2">
    <molecule id="Q8RXL8-1"/>
    <property type="protein sequence ID" value="AT1G06890.2"/>
    <property type="gene ID" value="AT1G06890"/>
</dbReference>
<dbReference type="KEGG" id="ath:AT1G06890"/>
<dbReference type="Araport" id="AT1G06890"/>
<dbReference type="TAIR" id="AT1G06890">
    <property type="gene designation" value="UXT3"/>
</dbReference>
<dbReference type="eggNOG" id="KOG1441">
    <property type="taxonomic scope" value="Eukaryota"/>
</dbReference>
<dbReference type="InParanoid" id="Q8RXL8"/>
<dbReference type="OrthoDB" id="5547497at2759"/>
<dbReference type="PhylomeDB" id="Q8RXL8"/>
<dbReference type="CD-CODE" id="4299E36E">
    <property type="entry name" value="Nucleolus"/>
</dbReference>
<dbReference type="PRO" id="PR:Q8RXL8"/>
<dbReference type="Proteomes" id="UP000006548">
    <property type="component" value="Chromosome 1"/>
</dbReference>
<dbReference type="ExpressionAtlas" id="Q8RXL8">
    <property type="expression patterns" value="baseline and differential"/>
</dbReference>
<dbReference type="GO" id="GO:0005768">
    <property type="term" value="C:endosome"/>
    <property type="evidence" value="ECO:0007005"/>
    <property type="project" value="TAIR"/>
</dbReference>
<dbReference type="GO" id="GO:0005794">
    <property type="term" value="C:Golgi apparatus"/>
    <property type="evidence" value="ECO:0000314"/>
    <property type="project" value="TAIR"/>
</dbReference>
<dbReference type="GO" id="GO:0000139">
    <property type="term" value="C:Golgi membrane"/>
    <property type="evidence" value="ECO:0007669"/>
    <property type="project" value="UniProtKB-SubCell"/>
</dbReference>
<dbReference type="GO" id="GO:0005802">
    <property type="term" value="C:trans-Golgi network"/>
    <property type="evidence" value="ECO:0007005"/>
    <property type="project" value="TAIR"/>
</dbReference>
<dbReference type="GO" id="GO:0015297">
    <property type="term" value="F:antiporter activity"/>
    <property type="evidence" value="ECO:0000314"/>
    <property type="project" value="UniProtKB"/>
</dbReference>
<dbReference type="GO" id="GO:0005464">
    <property type="term" value="F:UDP-xylose transmembrane transporter activity"/>
    <property type="evidence" value="ECO:0000314"/>
    <property type="project" value="TAIR"/>
</dbReference>
<dbReference type="GO" id="GO:0015790">
    <property type="term" value="P:UDP-xylose transmembrane transport"/>
    <property type="evidence" value="ECO:0000314"/>
    <property type="project" value="TAIR"/>
</dbReference>
<dbReference type="InterPro" id="IPR004853">
    <property type="entry name" value="Sugar_P_trans_dom"/>
</dbReference>
<dbReference type="InterPro" id="IPR050186">
    <property type="entry name" value="TPT_transporter"/>
</dbReference>
<dbReference type="PANTHER" id="PTHR11132">
    <property type="entry name" value="SOLUTE CARRIER FAMILY 35"/>
    <property type="match status" value="1"/>
</dbReference>
<dbReference type="Pfam" id="PF03151">
    <property type="entry name" value="TPT"/>
    <property type="match status" value="1"/>
</dbReference>
<dbReference type="SUPFAM" id="SSF103481">
    <property type="entry name" value="Multidrug resistance efflux transporter EmrE"/>
    <property type="match status" value="2"/>
</dbReference>
<gene>
    <name evidence="7" type="primary">UXT3</name>
    <name evidence="5" type="ordered locus">At1g06890</name>
    <name evidence="6" type="ORF">F4H5.5</name>
</gene>
<keyword id="KW-0025">Alternative splicing</keyword>
<keyword id="KW-0050">Antiport</keyword>
<keyword id="KW-0333">Golgi apparatus</keyword>
<keyword id="KW-0472">Membrane</keyword>
<keyword id="KW-0597">Phosphoprotein</keyword>
<keyword id="KW-1185">Reference proteome</keyword>
<keyword id="KW-0762">Sugar transport</keyword>
<keyword id="KW-0812">Transmembrane</keyword>
<keyword id="KW-1133">Transmembrane helix</keyword>
<keyword id="KW-0813">Transport</keyword>
<reference key="1">
    <citation type="journal article" date="2015" name="Plant Cell">
        <title>Identification and characterization of a Golgi-localized UDP-xylose transporter family from Arabidopsis.</title>
        <authorList>
            <person name="Ebert B."/>
            <person name="Rautengarten C."/>
            <person name="Guo X."/>
            <person name="Xiong G."/>
            <person name="Stonebloom S."/>
            <person name="Smith-Moritz A.M."/>
            <person name="Herter T."/>
            <person name="Chan L.J."/>
            <person name="Adams P.D."/>
            <person name="Petzold C.J."/>
            <person name="Pauly M."/>
            <person name="Willats W.G."/>
            <person name="Heazlewood J.L."/>
            <person name="Scheller H.V."/>
        </authorList>
    </citation>
    <scope>NUCLEOTIDE SEQUENCE [MRNA]</scope>
    <scope>GENE FAMILY</scope>
    <scope>NOMENCLATURE</scope>
    <scope>TISSUE SPECIFICITY</scope>
    <scope>SUBCELLULAR LOCATION</scope>
    <scope>FUNCTION</scope>
    <scope>BIOPHYSICOCHEMICAL PROPERTIES</scope>
    <source>
        <strain>cv. Columbia</strain>
    </source>
</reference>
<reference key="2">
    <citation type="journal article" date="2000" name="Nature">
        <title>Sequence and analysis of chromosome 1 of the plant Arabidopsis thaliana.</title>
        <authorList>
            <person name="Theologis A."/>
            <person name="Ecker J.R."/>
            <person name="Palm C.J."/>
            <person name="Federspiel N.A."/>
            <person name="Kaul S."/>
            <person name="White O."/>
            <person name="Alonso J."/>
            <person name="Altafi H."/>
            <person name="Araujo R."/>
            <person name="Bowman C.L."/>
            <person name="Brooks S.Y."/>
            <person name="Buehler E."/>
            <person name="Chan A."/>
            <person name="Chao Q."/>
            <person name="Chen H."/>
            <person name="Cheuk R.F."/>
            <person name="Chin C.W."/>
            <person name="Chung M.K."/>
            <person name="Conn L."/>
            <person name="Conway A.B."/>
            <person name="Conway A.R."/>
            <person name="Creasy T.H."/>
            <person name="Dewar K."/>
            <person name="Dunn P."/>
            <person name="Etgu P."/>
            <person name="Feldblyum T.V."/>
            <person name="Feng J.-D."/>
            <person name="Fong B."/>
            <person name="Fujii C.Y."/>
            <person name="Gill J.E."/>
            <person name="Goldsmith A.D."/>
            <person name="Haas B."/>
            <person name="Hansen N.F."/>
            <person name="Hughes B."/>
            <person name="Huizar L."/>
            <person name="Hunter J.L."/>
            <person name="Jenkins J."/>
            <person name="Johnson-Hopson C."/>
            <person name="Khan S."/>
            <person name="Khaykin E."/>
            <person name="Kim C.J."/>
            <person name="Koo H.L."/>
            <person name="Kremenetskaia I."/>
            <person name="Kurtz D.B."/>
            <person name="Kwan A."/>
            <person name="Lam B."/>
            <person name="Langin-Hooper S."/>
            <person name="Lee A."/>
            <person name="Lee J.M."/>
            <person name="Lenz C.A."/>
            <person name="Li J.H."/>
            <person name="Li Y.-P."/>
            <person name="Lin X."/>
            <person name="Liu S.X."/>
            <person name="Liu Z.A."/>
            <person name="Luros J.S."/>
            <person name="Maiti R."/>
            <person name="Marziali A."/>
            <person name="Militscher J."/>
            <person name="Miranda M."/>
            <person name="Nguyen M."/>
            <person name="Nierman W.C."/>
            <person name="Osborne B.I."/>
            <person name="Pai G."/>
            <person name="Peterson J."/>
            <person name="Pham P.K."/>
            <person name="Rizzo M."/>
            <person name="Rooney T."/>
            <person name="Rowley D."/>
            <person name="Sakano H."/>
            <person name="Salzberg S.L."/>
            <person name="Schwartz J.R."/>
            <person name="Shinn P."/>
            <person name="Southwick A.M."/>
            <person name="Sun H."/>
            <person name="Tallon L.J."/>
            <person name="Tambunga G."/>
            <person name="Toriumi M.J."/>
            <person name="Town C.D."/>
            <person name="Utterback T."/>
            <person name="Van Aken S."/>
            <person name="Vaysberg M."/>
            <person name="Vysotskaia V.S."/>
            <person name="Walker M."/>
            <person name="Wu D."/>
            <person name="Yu G."/>
            <person name="Fraser C.M."/>
            <person name="Venter J.C."/>
            <person name="Davis R.W."/>
        </authorList>
    </citation>
    <scope>NUCLEOTIDE SEQUENCE [LARGE SCALE GENOMIC DNA]</scope>
    <source>
        <strain>cv. Columbia</strain>
    </source>
</reference>
<reference key="3">
    <citation type="journal article" date="2017" name="Plant J.">
        <title>Araport11: a complete reannotation of the Arabidopsis thaliana reference genome.</title>
        <authorList>
            <person name="Cheng C.Y."/>
            <person name="Krishnakumar V."/>
            <person name="Chan A.P."/>
            <person name="Thibaud-Nissen F."/>
            <person name="Schobel S."/>
            <person name="Town C.D."/>
        </authorList>
    </citation>
    <scope>GENOME REANNOTATION</scope>
    <source>
        <strain>cv. Columbia</strain>
    </source>
</reference>
<reference key="4">
    <citation type="journal article" date="2003" name="Science">
        <title>Empirical analysis of transcriptional activity in the Arabidopsis genome.</title>
        <authorList>
            <person name="Yamada K."/>
            <person name="Lim J."/>
            <person name="Dale J.M."/>
            <person name="Chen H."/>
            <person name="Shinn P."/>
            <person name="Palm C.J."/>
            <person name="Southwick A.M."/>
            <person name="Wu H.C."/>
            <person name="Kim C.J."/>
            <person name="Nguyen M."/>
            <person name="Pham P.K."/>
            <person name="Cheuk R.F."/>
            <person name="Karlin-Newmann G."/>
            <person name="Liu S.X."/>
            <person name="Lam B."/>
            <person name="Sakano H."/>
            <person name="Wu T."/>
            <person name="Yu G."/>
            <person name="Miranda M."/>
            <person name="Quach H.L."/>
            <person name="Tripp M."/>
            <person name="Chang C.H."/>
            <person name="Lee J.M."/>
            <person name="Toriumi M.J."/>
            <person name="Chan M.M."/>
            <person name="Tang C.C."/>
            <person name="Onodera C.S."/>
            <person name="Deng J.M."/>
            <person name="Akiyama K."/>
            <person name="Ansari Y."/>
            <person name="Arakawa T."/>
            <person name="Banh J."/>
            <person name="Banno F."/>
            <person name="Bowser L."/>
            <person name="Brooks S.Y."/>
            <person name="Carninci P."/>
            <person name="Chao Q."/>
            <person name="Choy N."/>
            <person name="Enju A."/>
            <person name="Goldsmith A.D."/>
            <person name="Gurjal M."/>
            <person name="Hansen N.F."/>
            <person name="Hayashizaki Y."/>
            <person name="Johnson-Hopson C."/>
            <person name="Hsuan V.W."/>
            <person name="Iida K."/>
            <person name="Karnes M."/>
            <person name="Khan S."/>
            <person name="Koesema E."/>
            <person name="Ishida J."/>
            <person name="Jiang P.X."/>
            <person name="Jones T."/>
            <person name="Kawai J."/>
            <person name="Kamiya A."/>
            <person name="Meyers C."/>
            <person name="Nakajima M."/>
            <person name="Narusaka M."/>
            <person name="Seki M."/>
            <person name="Sakurai T."/>
            <person name="Satou M."/>
            <person name="Tamse R."/>
            <person name="Vaysberg M."/>
            <person name="Wallender E.K."/>
            <person name="Wong C."/>
            <person name="Yamamura Y."/>
            <person name="Yuan S."/>
            <person name="Shinozaki K."/>
            <person name="Davis R.W."/>
            <person name="Theologis A."/>
            <person name="Ecker J.R."/>
        </authorList>
    </citation>
    <scope>NUCLEOTIDE SEQUENCE [LARGE SCALE MRNA]</scope>
    <source>
        <strain>cv. Columbia</strain>
    </source>
</reference>
<reference key="5">
    <citation type="journal article" date="2009" name="Plant Physiol.">
        <title>Large-scale Arabidopsis phosphoproteome profiling reveals novel chloroplast kinase substrates and phosphorylation networks.</title>
        <authorList>
            <person name="Reiland S."/>
            <person name="Messerli G."/>
            <person name="Baerenfaller K."/>
            <person name="Gerrits B."/>
            <person name="Endler A."/>
            <person name="Grossmann J."/>
            <person name="Gruissem W."/>
            <person name="Baginsky S."/>
        </authorList>
    </citation>
    <scope>IDENTIFICATION BY MASS SPECTROMETRY [LARGE SCALE ANALYSIS]</scope>
</reference>
<reference key="6">
    <citation type="journal article" date="2014" name="Proc. Natl. Acad. Sci. U.S.A.">
        <title>The Golgi localized bifunctional UDP-rhamnose/UDP-galactose transporter family of Arabidopsis.</title>
        <authorList>
            <person name="Rautengarten C."/>
            <person name="Ebert B."/>
            <person name="Moreno I."/>
            <person name="Temple H."/>
            <person name="Herter T."/>
            <person name="Link B."/>
            <person name="Donas-Cofre D."/>
            <person name="Moreno A."/>
            <person name="Saez-Aguayo S."/>
            <person name="Blanco F."/>
            <person name="Mortimer J.C."/>
            <person name="Schultink A."/>
            <person name="Reiter W.D."/>
            <person name="Dupree P."/>
            <person name="Pauly M."/>
            <person name="Heazlewood J.L."/>
            <person name="Scheller H.V."/>
            <person name="Orellana A."/>
        </authorList>
    </citation>
    <scope>GENE FAMILY</scope>
</reference>
<protein>
    <recommendedName>
        <fullName evidence="7">UDP-xylose transporter 3</fullName>
    </recommendedName>
</protein>
<feature type="chain" id="PRO_0000300108" description="UDP-xylose transporter 3">
    <location>
        <begin position="1"/>
        <end position="357"/>
    </location>
</feature>
<feature type="transmembrane region" description="Helical" evidence="2">
    <location>
        <begin position="7"/>
        <end position="27"/>
    </location>
</feature>
<feature type="transmembrane region" description="Helical" evidence="2">
    <location>
        <begin position="31"/>
        <end position="51"/>
    </location>
</feature>
<feature type="transmembrane region" description="Helical" evidence="2">
    <location>
        <begin position="75"/>
        <end position="95"/>
    </location>
</feature>
<feature type="transmembrane region" description="Helical" evidence="2">
    <location>
        <begin position="100"/>
        <end position="120"/>
    </location>
</feature>
<feature type="transmembrane region" description="Helical" evidence="2">
    <location>
        <begin position="132"/>
        <end position="152"/>
    </location>
</feature>
<feature type="transmembrane region" description="Helical" evidence="2">
    <location>
        <begin position="154"/>
        <end position="174"/>
    </location>
</feature>
<feature type="transmembrane region" description="Helical" evidence="2">
    <location>
        <begin position="194"/>
        <end position="214"/>
    </location>
</feature>
<feature type="transmembrane region" description="Helical" evidence="2">
    <location>
        <begin position="224"/>
        <end position="244"/>
    </location>
</feature>
<feature type="transmembrane region" description="Helical" evidence="2">
    <location>
        <begin position="250"/>
        <end position="270"/>
    </location>
</feature>
<feature type="transmembrane region" description="Helical" evidence="2">
    <location>
        <begin position="280"/>
        <end position="300"/>
    </location>
</feature>
<feature type="modified residue" description="Phosphoserine" evidence="1">
    <location>
        <position position="334"/>
    </location>
</feature>